<accession>Q41640</accession>
<protein>
    <recommendedName>
        <fullName>Ras-related protein Rab7</fullName>
    </recommendedName>
</protein>
<name>RAB7_VIGAC</name>
<reference key="1">
    <citation type="journal article" date="1993" name="EMBO J.">
        <title>Roles of plant homologs of Rab1p and Rab7p in the biogenesis of the peribacteroid membrane, a subcellular compartment formed de novo during root nodule symbiosis.</title>
        <authorList>
            <person name="Cheon C.I."/>
            <person name="Lee N.G."/>
            <person name="Siddique A.B.M."/>
            <person name="Bal A.K."/>
            <person name="Verma D.P.S."/>
        </authorList>
    </citation>
    <scope>NUCLEOTIDE SEQUENCE [MRNA]</scope>
    <source>
        <tissue>Root nodule</tissue>
    </source>
</reference>
<proteinExistence type="evidence at transcript level"/>
<dbReference type="EMBL" id="L14928">
    <property type="protein sequence ID" value="AAA34242.1"/>
    <property type="molecule type" value="mRNA"/>
</dbReference>
<dbReference type="PIR" id="S39567">
    <property type="entry name" value="S39567"/>
</dbReference>
<dbReference type="SMR" id="Q41640"/>
<dbReference type="GO" id="GO:0005886">
    <property type="term" value="C:plasma membrane"/>
    <property type="evidence" value="ECO:0007669"/>
    <property type="project" value="UniProtKB-SubCell"/>
</dbReference>
<dbReference type="GO" id="GO:0005774">
    <property type="term" value="C:vacuolar membrane"/>
    <property type="evidence" value="ECO:0007669"/>
    <property type="project" value="TreeGrafter"/>
</dbReference>
<dbReference type="GO" id="GO:0005525">
    <property type="term" value="F:GTP binding"/>
    <property type="evidence" value="ECO:0007669"/>
    <property type="project" value="UniProtKB-KW"/>
</dbReference>
<dbReference type="GO" id="GO:0003924">
    <property type="term" value="F:GTPase activity"/>
    <property type="evidence" value="ECO:0007669"/>
    <property type="project" value="InterPro"/>
</dbReference>
<dbReference type="GO" id="GO:0015031">
    <property type="term" value="P:protein transport"/>
    <property type="evidence" value="ECO:0007669"/>
    <property type="project" value="UniProtKB-KW"/>
</dbReference>
<dbReference type="CDD" id="cd01862">
    <property type="entry name" value="Rab7"/>
    <property type="match status" value="1"/>
</dbReference>
<dbReference type="FunFam" id="3.40.50.300:FF:000295">
    <property type="entry name" value="Ras-related protein Rab7"/>
    <property type="match status" value="1"/>
</dbReference>
<dbReference type="Gene3D" id="3.40.50.300">
    <property type="entry name" value="P-loop containing nucleotide triphosphate hydrolases"/>
    <property type="match status" value="1"/>
</dbReference>
<dbReference type="InterPro" id="IPR027417">
    <property type="entry name" value="P-loop_NTPase"/>
</dbReference>
<dbReference type="InterPro" id="IPR005225">
    <property type="entry name" value="Small_GTP-bd"/>
</dbReference>
<dbReference type="InterPro" id="IPR001806">
    <property type="entry name" value="Small_GTPase"/>
</dbReference>
<dbReference type="NCBIfam" id="TIGR00231">
    <property type="entry name" value="small_GTP"/>
    <property type="match status" value="1"/>
</dbReference>
<dbReference type="PANTHER" id="PTHR47981">
    <property type="entry name" value="RAB FAMILY"/>
    <property type="match status" value="1"/>
</dbReference>
<dbReference type="PANTHER" id="PTHR47981:SF2">
    <property type="entry name" value="RAS-RELATED PROTEIN RABG3B"/>
    <property type="match status" value="1"/>
</dbReference>
<dbReference type="Pfam" id="PF00071">
    <property type="entry name" value="Ras"/>
    <property type="match status" value="1"/>
</dbReference>
<dbReference type="PRINTS" id="PR00449">
    <property type="entry name" value="RASTRNSFRMNG"/>
</dbReference>
<dbReference type="SMART" id="SM00175">
    <property type="entry name" value="RAB"/>
    <property type="match status" value="1"/>
</dbReference>
<dbReference type="SMART" id="SM00176">
    <property type="entry name" value="RAN"/>
    <property type="match status" value="1"/>
</dbReference>
<dbReference type="SMART" id="SM00173">
    <property type="entry name" value="RAS"/>
    <property type="match status" value="1"/>
</dbReference>
<dbReference type="SMART" id="SM00174">
    <property type="entry name" value="RHO"/>
    <property type="match status" value="1"/>
</dbReference>
<dbReference type="SUPFAM" id="SSF52540">
    <property type="entry name" value="P-loop containing nucleoside triphosphate hydrolases"/>
    <property type="match status" value="1"/>
</dbReference>
<dbReference type="PROSITE" id="PS51419">
    <property type="entry name" value="RAB"/>
    <property type="match status" value="1"/>
</dbReference>
<comment type="function">
    <text evidence="1">Protein transport. Probably involved in vesicular traffic (By similarity).</text>
</comment>
<comment type="subcellular location">
    <subcellularLocation>
        <location evidence="2">Cell membrane</location>
        <topology evidence="2">Lipid-anchor</topology>
        <orientation evidence="2">Cytoplasmic side</orientation>
    </subcellularLocation>
</comment>
<comment type="similarity">
    <text evidence="2">Belongs to the small GTPase superfamily. Rab family.</text>
</comment>
<keyword id="KW-1003">Cell membrane</keyword>
<keyword id="KW-0342">GTP-binding</keyword>
<keyword id="KW-0449">Lipoprotein</keyword>
<keyword id="KW-0472">Membrane</keyword>
<keyword id="KW-0488">Methylation</keyword>
<keyword id="KW-0547">Nucleotide-binding</keyword>
<keyword id="KW-0636">Prenylation</keyword>
<keyword id="KW-0653">Protein transport</keyword>
<keyword id="KW-0813">Transport</keyword>
<evidence type="ECO:0000250" key="1"/>
<evidence type="ECO:0000305" key="2"/>
<organism>
    <name type="scientific">Vigna aconitifolia</name>
    <name type="common">Moth bean</name>
    <name type="synonym">Phaseolus aconitifolius</name>
    <dbReference type="NCBI Taxonomy" id="3918"/>
    <lineage>
        <taxon>Eukaryota</taxon>
        <taxon>Viridiplantae</taxon>
        <taxon>Streptophyta</taxon>
        <taxon>Embryophyta</taxon>
        <taxon>Tracheophyta</taxon>
        <taxon>Spermatophyta</taxon>
        <taxon>Magnoliopsida</taxon>
        <taxon>eudicotyledons</taxon>
        <taxon>Gunneridae</taxon>
        <taxon>Pentapetalae</taxon>
        <taxon>rosids</taxon>
        <taxon>fabids</taxon>
        <taxon>Fabales</taxon>
        <taxon>Fabaceae</taxon>
        <taxon>Papilionoideae</taxon>
        <taxon>50 kb inversion clade</taxon>
        <taxon>NPAAA clade</taxon>
        <taxon>indigoferoid/millettioid clade</taxon>
        <taxon>Phaseoleae</taxon>
        <taxon>Vigna</taxon>
    </lineage>
</organism>
<feature type="chain" id="PRO_0000121287" description="Ras-related protein Rab7">
    <location>
        <begin position="1"/>
        <end position="206"/>
    </location>
</feature>
<feature type="binding site" evidence="1">
    <location>
        <begin position="15"/>
        <end position="22"/>
    </location>
    <ligand>
        <name>GTP</name>
        <dbReference type="ChEBI" id="CHEBI:37565"/>
    </ligand>
</feature>
<feature type="binding site" evidence="1">
    <location>
        <begin position="63"/>
        <end position="67"/>
    </location>
    <ligand>
        <name>GTP</name>
        <dbReference type="ChEBI" id="CHEBI:37565"/>
    </ligand>
</feature>
<feature type="binding site" evidence="1">
    <location>
        <begin position="125"/>
        <end position="128"/>
    </location>
    <ligand>
        <name>GTP</name>
        <dbReference type="ChEBI" id="CHEBI:37565"/>
    </ligand>
</feature>
<feature type="modified residue" description="Cysteine methyl ester" evidence="1">
    <location>
        <position position="206"/>
    </location>
</feature>
<feature type="lipid moiety-binding region" description="S-geranylgeranyl cysteine" evidence="1">
    <location>
        <position position="204"/>
    </location>
</feature>
<feature type="lipid moiety-binding region" description="S-geranylgeranyl cysteine" evidence="1">
    <location>
        <position position="206"/>
    </location>
</feature>
<sequence length="206" mass="23098">MSLRRRTLLKVIVLGDTGVGKTSLMNQYVHKKFSQQYKATIGADFVTKELQIDDRLVTLQIWDTAGQERFQSLGVAFYRGADCCVLAYDVNVMKSFDTLDNWHEEFLKQANPPDPRSFPFILLGNKIDIDGGNSRVVSEKKAKDWCASKGNIPYFETSAKEDFNVDAAFLCIAKAALANEHEQDIYFQGIPEAAVPENEQRSGCAC</sequence>